<accession>Q59011</accession>
<feature type="chain" id="PRO_0000093719" description="Inosine-5'-monophosphate dehydrogenase">
    <location>
        <begin position="1"/>
        <end position="496"/>
    </location>
</feature>
<feature type="domain" description="CBS 1" evidence="1">
    <location>
        <begin position="96"/>
        <end position="152"/>
    </location>
</feature>
<feature type="domain" description="CBS 2" evidence="1">
    <location>
        <begin position="156"/>
        <end position="212"/>
    </location>
</feature>
<feature type="active site" description="Thioimidate intermediate" evidence="1">
    <location>
        <position position="306"/>
    </location>
</feature>
<feature type="active site" description="Proton acceptor" evidence="1">
    <location>
        <position position="405"/>
    </location>
</feature>
<feature type="binding site" evidence="1">
    <location>
        <position position="247"/>
    </location>
    <ligand>
        <name>NAD(+)</name>
        <dbReference type="ChEBI" id="CHEBI:57540"/>
    </ligand>
</feature>
<feature type="binding site" evidence="1">
    <location>
        <begin position="299"/>
        <end position="301"/>
    </location>
    <ligand>
        <name>NAD(+)</name>
        <dbReference type="ChEBI" id="CHEBI:57540"/>
    </ligand>
</feature>
<feature type="binding site" description="in other chain" evidence="1">
    <location>
        <position position="301"/>
    </location>
    <ligand>
        <name>K(+)</name>
        <dbReference type="ChEBI" id="CHEBI:29103"/>
        <note>ligand shared between two tetrameric partners</note>
    </ligand>
</feature>
<feature type="binding site" description="in other chain" evidence="1">
    <location>
        <position position="303"/>
    </location>
    <ligand>
        <name>K(+)</name>
        <dbReference type="ChEBI" id="CHEBI:29103"/>
        <note>ligand shared between two tetrameric partners</note>
    </ligand>
</feature>
<feature type="binding site" evidence="1">
    <location>
        <position position="304"/>
    </location>
    <ligand>
        <name>IMP</name>
        <dbReference type="ChEBI" id="CHEBI:58053"/>
    </ligand>
</feature>
<feature type="binding site" description="in other chain" evidence="1">
    <location>
        <position position="306"/>
    </location>
    <ligand>
        <name>K(+)</name>
        <dbReference type="ChEBI" id="CHEBI:29103"/>
        <note>ligand shared between two tetrameric partners</note>
    </ligand>
</feature>
<feature type="binding site" evidence="1">
    <location>
        <begin position="339"/>
        <end position="341"/>
    </location>
    <ligand>
        <name>IMP</name>
        <dbReference type="ChEBI" id="CHEBI:58053"/>
    </ligand>
</feature>
<feature type="binding site" evidence="1">
    <location>
        <begin position="362"/>
        <end position="363"/>
    </location>
    <ligand>
        <name>IMP</name>
        <dbReference type="ChEBI" id="CHEBI:58053"/>
    </ligand>
</feature>
<feature type="binding site" evidence="1">
    <location>
        <begin position="386"/>
        <end position="390"/>
    </location>
    <ligand>
        <name>IMP</name>
        <dbReference type="ChEBI" id="CHEBI:58053"/>
    </ligand>
</feature>
<feature type="binding site" evidence="1">
    <location>
        <position position="423"/>
    </location>
    <ligand>
        <name>IMP</name>
        <dbReference type="ChEBI" id="CHEBI:58053"/>
    </ligand>
</feature>
<feature type="binding site" evidence="1">
    <location>
        <position position="477"/>
    </location>
    <ligand>
        <name>K(+)</name>
        <dbReference type="ChEBI" id="CHEBI:29103"/>
        <note>ligand shared between two tetrameric partners</note>
    </ligand>
</feature>
<feature type="binding site" evidence="1">
    <location>
        <position position="478"/>
    </location>
    <ligand>
        <name>K(+)</name>
        <dbReference type="ChEBI" id="CHEBI:29103"/>
        <note>ligand shared between two tetrameric partners</note>
    </ligand>
</feature>
<feature type="binding site" evidence="1">
    <location>
        <position position="479"/>
    </location>
    <ligand>
        <name>K(+)</name>
        <dbReference type="ChEBI" id="CHEBI:29103"/>
        <note>ligand shared between two tetrameric partners</note>
    </ligand>
</feature>
<feature type="helix" evidence="2">
    <location>
        <begin position="2"/>
        <end position="8"/>
    </location>
</feature>
<feature type="helix" evidence="2">
    <location>
        <begin position="15"/>
        <end position="17"/>
    </location>
</feature>
<feature type="strand" evidence="2">
    <location>
        <begin position="18"/>
        <end position="20"/>
    </location>
</feature>
<feature type="helix" evidence="2">
    <location>
        <begin position="29"/>
        <end position="31"/>
    </location>
</feature>
<feature type="strand" evidence="2">
    <location>
        <begin position="36"/>
        <end position="38"/>
    </location>
</feature>
<feature type="strand" evidence="2">
    <location>
        <begin position="41"/>
        <end position="45"/>
    </location>
</feature>
<feature type="strand" evidence="2">
    <location>
        <begin position="47"/>
        <end position="49"/>
    </location>
</feature>
<feature type="turn" evidence="2">
    <location>
        <begin position="53"/>
        <end position="55"/>
    </location>
</feature>
<feature type="helix" evidence="2">
    <location>
        <begin position="58"/>
        <end position="67"/>
    </location>
</feature>
<feature type="strand" evidence="2">
    <location>
        <begin position="75"/>
        <end position="77"/>
    </location>
</feature>
<feature type="helix" evidence="2">
    <location>
        <begin position="79"/>
        <end position="90"/>
    </location>
</feature>
<feature type="strand" evidence="2">
    <location>
        <begin position="217"/>
        <end position="219"/>
    </location>
</feature>
<feature type="strand" evidence="2">
    <location>
        <begin position="222"/>
        <end position="225"/>
    </location>
</feature>
<feature type="helix" evidence="2">
    <location>
        <begin position="230"/>
        <end position="238"/>
    </location>
</feature>
<feature type="strand" evidence="2">
    <location>
        <begin position="242"/>
        <end position="247"/>
    </location>
</feature>
<feature type="helix" evidence="2">
    <location>
        <begin position="254"/>
        <end position="257"/>
    </location>
</feature>
<feature type="helix" evidence="2">
    <location>
        <begin position="265"/>
        <end position="268"/>
    </location>
</feature>
<feature type="strand" evidence="2">
    <location>
        <begin position="273"/>
        <end position="279"/>
    </location>
</feature>
<feature type="helix" evidence="2">
    <location>
        <begin position="282"/>
        <end position="287"/>
    </location>
</feature>
<feature type="strand" evidence="2">
    <location>
        <begin position="295"/>
        <end position="298"/>
    </location>
</feature>
<feature type="helix" evidence="2">
    <location>
        <begin position="308"/>
        <end position="312"/>
    </location>
</feature>
<feature type="helix" evidence="2">
    <location>
        <begin position="318"/>
        <end position="329"/>
    </location>
</feature>
<feature type="helix" evidence="2">
    <location>
        <begin position="330"/>
        <end position="332"/>
    </location>
</feature>
<feature type="strand" evidence="2">
    <location>
        <begin position="336"/>
        <end position="340"/>
    </location>
</feature>
<feature type="helix" evidence="2">
    <location>
        <begin position="345"/>
        <end position="353"/>
    </location>
</feature>
<feature type="strand" evidence="2">
    <location>
        <begin position="357"/>
        <end position="362"/>
    </location>
</feature>
<feature type="helix" evidence="2">
    <location>
        <begin position="363"/>
        <end position="365"/>
    </location>
</feature>
<feature type="strand" evidence="2">
    <location>
        <begin position="368"/>
        <end position="371"/>
    </location>
</feature>
<feature type="strand" evidence="2">
    <location>
        <begin position="375"/>
        <end position="378"/>
    </location>
</feature>
<feature type="strand" evidence="2">
    <location>
        <begin position="381"/>
        <end position="387"/>
    </location>
</feature>
<feature type="strand" evidence="2">
    <location>
        <begin position="426"/>
        <end position="430"/>
    </location>
</feature>
<feature type="helix" evidence="2">
    <location>
        <begin position="435"/>
        <end position="453"/>
    </location>
</feature>
<feature type="helix" evidence="2">
    <location>
        <begin position="458"/>
        <end position="464"/>
    </location>
</feature>
<feature type="strand" evidence="2">
    <location>
        <begin position="467"/>
        <end position="469"/>
    </location>
</feature>
<protein>
    <recommendedName>
        <fullName evidence="1">Inosine-5'-monophosphate dehydrogenase</fullName>
        <shortName evidence="1">IMP dehydrogenase</shortName>
        <shortName evidence="1">IMPD</shortName>
        <shortName evidence="1">IMPDH</shortName>
        <ecNumber evidence="1">1.1.1.205</ecNumber>
    </recommendedName>
</protein>
<sequence length="496" mass="53317">MFLKKLIEAKKAYTFDDVLLVPNASWVEPKDTDVSTDLAGLKLNIPIVSAAMDTVTEKEMAIALARLGGLGVIHRNMSIEEQVHQVQAVKKADEVVIKDVITVSPDDTVGEAINVMETYSISGLPVVDNEDKLVGIITHRDVKAIEDKTKKVKDVMTKDVVCAKEDVEEEEALELMYANRVERLPIVDDENRLIGIITLRDILKRRKYPQAARDKKGRLLVAAACGPHDFERAKALIEAEVDAIAIDCAHAHNMRVVENVKKFKEMLEGTDIKLIVGNIATKEAAEDLIKAGADVLKVGIGPGSICTTRVVAGVGVPQLTAVAEVADVAKEHNVPIIADGGIRYSGDIAKAIAAGADAVMLGSLLAGTDEAPGQLMVINGRKYKQYRGMGSLGAMTGGVGAGADRYFQAPAKSHMKHVKLVPEGVEGAVPYKGPVSEVVFQLIGGLRASMGYCGAKNLKEMQEKARFVIITPSGQVESHPHDIIITNEAPNYPLGK</sequence>
<gene>
    <name evidence="1" type="primary">guaB</name>
    <name type="ordered locus">MJ1616</name>
</gene>
<comment type="function">
    <text evidence="1">Catalyzes the conversion of inosine 5'-phosphate (IMP) to xanthosine 5'-phosphate (XMP), the first committed and rate-limiting step in the de novo synthesis of guanine nucleotides, and therefore plays an important role in the regulation of cell growth.</text>
</comment>
<comment type="catalytic activity">
    <reaction evidence="1">
        <text>IMP + NAD(+) + H2O = XMP + NADH + H(+)</text>
        <dbReference type="Rhea" id="RHEA:11708"/>
        <dbReference type="ChEBI" id="CHEBI:15377"/>
        <dbReference type="ChEBI" id="CHEBI:15378"/>
        <dbReference type="ChEBI" id="CHEBI:57464"/>
        <dbReference type="ChEBI" id="CHEBI:57540"/>
        <dbReference type="ChEBI" id="CHEBI:57945"/>
        <dbReference type="ChEBI" id="CHEBI:58053"/>
        <dbReference type="EC" id="1.1.1.205"/>
    </reaction>
</comment>
<comment type="cofactor">
    <cofactor evidence="1">
        <name>K(+)</name>
        <dbReference type="ChEBI" id="CHEBI:29103"/>
    </cofactor>
</comment>
<comment type="activity regulation">
    <text evidence="1">Mycophenolic acid (MPA) is a non-competitive inhibitor that prevents formation of the closed enzyme conformation by binding to the same site as the amobile flap. In contrast, mizoribine monophosphate (MZP) is a competitive inhibitor that induces the closed conformation. MPA is a potent inhibitor of mammalian IMPDHs but a poor inhibitor of the bacterial enzymes. MZP is a more potent inhibitor of bacterial IMPDH.</text>
</comment>
<comment type="pathway">
    <text evidence="1">Purine metabolism; XMP biosynthesis via de novo pathway; XMP from IMP: step 1/1.</text>
</comment>
<comment type="subunit">
    <text evidence="1">Homotetramer.</text>
</comment>
<comment type="similarity">
    <text evidence="1">Belongs to the IMPDH/GMPR family.</text>
</comment>
<evidence type="ECO:0000255" key="1">
    <source>
        <dbReference type="HAMAP-Rule" id="MF_01964"/>
    </source>
</evidence>
<evidence type="ECO:0007829" key="2">
    <source>
        <dbReference type="PDB" id="7XLO"/>
    </source>
</evidence>
<name>IMDH_METJA</name>
<reference key="1">
    <citation type="journal article" date="1996" name="Science">
        <title>Complete genome sequence of the methanogenic archaeon, Methanococcus jannaschii.</title>
        <authorList>
            <person name="Bult C.J."/>
            <person name="White O."/>
            <person name="Olsen G.J."/>
            <person name="Zhou L."/>
            <person name="Fleischmann R.D."/>
            <person name="Sutton G.G."/>
            <person name="Blake J.A."/>
            <person name="FitzGerald L.M."/>
            <person name="Clayton R.A."/>
            <person name="Gocayne J.D."/>
            <person name="Kerlavage A.R."/>
            <person name="Dougherty B.A."/>
            <person name="Tomb J.-F."/>
            <person name="Adams M.D."/>
            <person name="Reich C.I."/>
            <person name="Overbeek R."/>
            <person name="Kirkness E.F."/>
            <person name="Weinstock K.G."/>
            <person name="Merrick J.M."/>
            <person name="Glodek A."/>
            <person name="Scott J.L."/>
            <person name="Geoghagen N.S.M."/>
            <person name="Weidman J.F."/>
            <person name="Fuhrmann J.L."/>
            <person name="Nguyen D."/>
            <person name="Utterback T.R."/>
            <person name="Kelley J.M."/>
            <person name="Peterson J.D."/>
            <person name="Sadow P.W."/>
            <person name="Hanna M.C."/>
            <person name="Cotton M.D."/>
            <person name="Roberts K.M."/>
            <person name="Hurst M.A."/>
            <person name="Kaine B.P."/>
            <person name="Borodovsky M."/>
            <person name="Klenk H.-P."/>
            <person name="Fraser C.M."/>
            <person name="Smith H.O."/>
            <person name="Woese C.R."/>
            <person name="Venter J.C."/>
        </authorList>
    </citation>
    <scope>NUCLEOTIDE SEQUENCE [LARGE SCALE GENOMIC DNA]</scope>
    <source>
        <strain>ATCC 43067 / DSM 2661 / JAL-1 / JCM 10045 / NBRC 100440</strain>
    </source>
</reference>
<proteinExistence type="evidence at protein level"/>
<keyword id="KW-0002">3D-structure</keyword>
<keyword id="KW-0129">CBS domain</keyword>
<keyword id="KW-0332">GMP biosynthesis</keyword>
<keyword id="KW-0479">Metal-binding</keyword>
<keyword id="KW-0520">NAD</keyword>
<keyword id="KW-0560">Oxidoreductase</keyword>
<keyword id="KW-0630">Potassium</keyword>
<keyword id="KW-0658">Purine biosynthesis</keyword>
<keyword id="KW-1185">Reference proteome</keyword>
<keyword id="KW-0677">Repeat</keyword>
<dbReference type="EC" id="1.1.1.205" evidence="1"/>
<dbReference type="EMBL" id="L77117">
    <property type="protein sequence ID" value="AAB99638.1"/>
    <property type="molecule type" value="Genomic_DNA"/>
</dbReference>
<dbReference type="PIR" id="G64501">
    <property type="entry name" value="G64501"/>
</dbReference>
<dbReference type="RefSeq" id="WP_010871141.1">
    <property type="nucleotide sequence ID" value="NC_000909.1"/>
</dbReference>
<dbReference type="PDB" id="7XLO">
    <property type="method" value="X-ray"/>
    <property type="resolution" value="2.60 A"/>
    <property type="chains" value="A/B=1-97, A/B=208-496"/>
</dbReference>
<dbReference type="PDBsum" id="7XLO"/>
<dbReference type="SMR" id="Q59011"/>
<dbReference type="FunCoup" id="Q59011">
    <property type="interactions" value="147"/>
</dbReference>
<dbReference type="STRING" id="243232.MJ_1616"/>
<dbReference type="PaxDb" id="243232-MJ_1616"/>
<dbReference type="EnsemblBacteria" id="AAB99638">
    <property type="protein sequence ID" value="AAB99638"/>
    <property type="gene ID" value="MJ_1616"/>
</dbReference>
<dbReference type="GeneID" id="1452525"/>
<dbReference type="KEGG" id="mja:MJ_1616"/>
<dbReference type="eggNOG" id="arCOG00612">
    <property type="taxonomic scope" value="Archaea"/>
</dbReference>
<dbReference type="HOGENOM" id="CLU_022552_2_1_2"/>
<dbReference type="InParanoid" id="Q59011"/>
<dbReference type="OrthoDB" id="21361at2157"/>
<dbReference type="PhylomeDB" id="Q59011"/>
<dbReference type="UniPathway" id="UPA00601">
    <property type="reaction ID" value="UER00295"/>
</dbReference>
<dbReference type="Proteomes" id="UP000000805">
    <property type="component" value="Chromosome"/>
</dbReference>
<dbReference type="GO" id="GO:0003938">
    <property type="term" value="F:IMP dehydrogenase activity"/>
    <property type="evidence" value="ECO:0000318"/>
    <property type="project" value="GO_Central"/>
</dbReference>
<dbReference type="GO" id="GO:0046872">
    <property type="term" value="F:metal ion binding"/>
    <property type="evidence" value="ECO:0007669"/>
    <property type="project" value="UniProtKB-UniRule"/>
</dbReference>
<dbReference type="GO" id="GO:0000166">
    <property type="term" value="F:nucleotide binding"/>
    <property type="evidence" value="ECO:0007669"/>
    <property type="project" value="UniProtKB-UniRule"/>
</dbReference>
<dbReference type="GO" id="GO:0006177">
    <property type="term" value="P:GMP biosynthetic process"/>
    <property type="evidence" value="ECO:0007669"/>
    <property type="project" value="UniProtKB-UniRule"/>
</dbReference>
<dbReference type="GO" id="GO:0006183">
    <property type="term" value="P:GTP biosynthetic process"/>
    <property type="evidence" value="ECO:0000318"/>
    <property type="project" value="GO_Central"/>
</dbReference>
<dbReference type="CDD" id="cd04601">
    <property type="entry name" value="CBS_pair_IMPDH"/>
    <property type="match status" value="1"/>
</dbReference>
<dbReference type="CDD" id="cd00381">
    <property type="entry name" value="IMPDH"/>
    <property type="match status" value="1"/>
</dbReference>
<dbReference type="FunFam" id="3.20.20.70:FF:000003">
    <property type="entry name" value="GMP reductase"/>
    <property type="match status" value="1"/>
</dbReference>
<dbReference type="Gene3D" id="3.20.20.70">
    <property type="entry name" value="Aldolase class I"/>
    <property type="match status" value="1"/>
</dbReference>
<dbReference type="HAMAP" id="MF_01964">
    <property type="entry name" value="IMPDH"/>
    <property type="match status" value="1"/>
</dbReference>
<dbReference type="InterPro" id="IPR013785">
    <property type="entry name" value="Aldolase_TIM"/>
</dbReference>
<dbReference type="InterPro" id="IPR000644">
    <property type="entry name" value="CBS_dom"/>
</dbReference>
<dbReference type="InterPro" id="IPR046342">
    <property type="entry name" value="CBS_dom_sf"/>
</dbReference>
<dbReference type="InterPro" id="IPR005990">
    <property type="entry name" value="IMP_DH"/>
</dbReference>
<dbReference type="InterPro" id="IPR015875">
    <property type="entry name" value="IMP_DH/GMP_Rdtase_CS"/>
</dbReference>
<dbReference type="InterPro" id="IPR001093">
    <property type="entry name" value="IMP_DH_GMPRt"/>
</dbReference>
<dbReference type="NCBIfam" id="TIGR01302">
    <property type="entry name" value="IMP_dehydrog"/>
    <property type="match status" value="1"/>
</dbReference>
<dbReference type="PANTHER" id="PTHR11911:SF111">
    <property type="entry name" value="INOSINE-5'-MONOPHOSPHATE DEHYDROGENASE"/>
    <property type="match status" value="1"/>
</dbReference>
<dbReference type="PANTHER" id="PTHR11911">
    <property type="entry name" value="INOSINE-5-MONOPHOSPHATE DEHYDROGENASE RELATED"/>
    <property type="match status" value="1"/>
</dbReference>
<dbReference type="Pfam" id="PF00571">
    <property type="entry name" value="CBS"/>
    <property type="match status" value="2"/>
</dbReference>
<dbReference type="Pfam" id="PF00478">
    <property type="entry name" value="IMPDH"/>
    <property type="match status" value="1"/>
</dbReference>
<dbReference type="PIRSF" id="PIRSF000130">
    <property type="entry name" value="IMPDH"/>
    <property type="match status" value="1"/>
</dbReference>
<dbReference type="SMART" id="SM00116">
    <property type="entry name" value="CBS"/>
    <property type="match status" value="2"/>
</dbReference>
<dbReference type="SMART" id="SM01240">
    <property type="entry name" value="IMPDH"/>
    <property type="match status" value="1"/>
</dbReference>
<dbReference type="SUPFAM" id="SSF54631">
    <property type="entry name" value="CBS-domain pair"/>
    <property type="match status" value="1"/>
</dbReference>
<dbReference type="SUPFAM" id="SSF51412">
    <property type="entry name" value="Inosine monophosphate dehydrogenase (IMPDH)"/>
    <property type="match status" value="1"/>
</dbReference>
<dbReference type="PROSITE" id="PS51371">
    <property type="entry name" value="CBS"/>
    <property type="match status" value="2"/>
</dbReference>
<dbReference type="PROSITE" id="PS00487">
    <property type="entry name" value="IMP_DH_GMP_RED"/>
    <property type="match status" value="1"/>
</dbReference>
<organism>
    <name type="scientific">Methanocaldococcus jannaschii (strain ATCC 43067 / DSM 2661 / JAL-1 / JCM 10045 / NBRC 100440)</name>
    <name type="common">Methanococcus jannaschii</name>
    <dbReference type="NCBI Taxonomy" id="243232"/>
    <lineage>
        <taxon>Archaea</taxon>
        <taxon>Methanobacteriati</taxon>
        <taxon>Methanobacteriota</taxon>
        <taxon>Methanomada group</taxon>
        <taxon>Methanococci</taxon>
        <taxon>Methanococcales</taxon>
        <taxon>Methanocaldococcaceae</taxon>
        <taxon>Methanocaldococcus</taxon>
    </lineage>
</organism>